<reference key="1">
    <citation type="journal article" date="2008" name="J. Bacteriol.">
        <title>Insights into the environmental resistance gene pool from the genome sequence of the multidrug-resistant environmental isolate Escherichia coli SMS-3-5.</title>
        <authorList>
            <person name="Fricke W.F."/>
            <person name="Wright M.S."/>
            <person name="Lindell A.H."/>
            <person name="Harkins D.M."/>
            <person name="Baker-Austin C."/>
            <person name="Ravel J."/>
            <person name="Stepanauskas R."/>
        </authorList>
    </citation>
    <scope>NUCLEOTIDE SEQUENCE [LARGE SCALE GENOMIC DNA]</scope>
    <source>
        <strain>SMS-3-5 / SECEC</strain>
    </source>
</reference>
<gene>
    <name evidence="1" type="primary">mhpA</name>
    <name type="ordered locus">EcSMS35_0378</name>
</gene>
<feature type="chain" id="PRO_1000186997" description="3-(3-hydroxy-phenyl)propionate/3-hydroxycinnamic acid hydroxylase">
    <location>
        <begin position="1"/>
        <end position="554"/>
    </location>
</feature>
<feature type="binding site" evidence="1">
    <location>
        <begin position="17"/>
        <end position="46"/>
    </location>
    <ligand>
        <name>FAD</name>
        <dbReference type="ChEBI" id="CHEBI:57692"/>
    </ligand>
</feature>
<feature type="binding site" evidence="1">
    <location>
        <begin position="285"/>
        <end position="295"/>
    </location>
    <ligand>
        <name>FAD</name>
        <dbReference type="ChEBI" id="CHEBI:57692"/>
    </ligand>
</feature>
<accession>B1LIN2</accession>
<protein>
    <recommendedName>
        <fullName evidence="1">3-(3-hydroxy-phenyl)propionate/3-hydroxycinnamic acid hydroxylase</fullName>
        <shortName evidence="1">3-HCI hydroxylase</shortName>
        <shortName evidence="1">3-HPP hydroxylase</shortName>
        <ecNumber evidence="1">1.14.13.127</ecNumber>
    </recommendedName>
</protein>
<proteinExistence type="inferred from homology"/>
<dbReference type="EC" id="1.14.13.127" evidence="1"/>
<dbReference type="EMBL" id="CP000970">
    <property type="protein sequence ID" value="ACB19374.1"/>
    <property type="molecule type" value="Genomic_DNA"/>
</dbReference>
<dbReference type="RefSeq" id="WP_001007420.1">
    <property type="nucleotide sequence ID" value="NC_010498.1"/>
</dbReference>
<dbReference type="SMR" id="B1LIN2"/>
<dbReference type="KEGG" id="ecm:EcSMS35_0378"/>
<dbReference type="HOGENOM" id="CLU_009665_20_2_6"/>
<dbReference type="UniPathway" id="UPA00714"/>
<dbReference type="Proteomes" id="UP000007011">
    <property type="component" value="Chromosome"/>
</dbReference>
<dbReference type="GO" id="GO:0008688">
    <property type="term" value="F:3-(3-hydroxyphenyl)propionate hydroxylase activity"/>
    <property type="evidence" value="ECO:0007669"/>
    <property type="project" value="UniProtKB-UniRule"/>
</dbReference>
<dbReference type="GO" id="GO:0071949">
    <property type="term" value="F:FAD binding"/>
    <property type="evidence" value="ECO:0007669"/>
    <property type="project" value="InterPro"/>
</dbReference>
<dbReference type="GO" id="GO:0019622">
    <property type="term" value="P:3-(3-hydroxy)phenylpropionate catabolic process"/>
    <property type="evidence" value="ECO:0007669"/>
    <property type="project" value="UniProtKB-UniRule"/>
</dbReference>
<dbReference type="GO" id="GO:0019380">
    <property type="term" value="P:3-phenylpropionate catabolic process"/>
    <property type="evidence" value="ECO:0007669"/>
    <property type="project" value="UniProtKB-UniPathway"/>
</dbReference>
<dbReference type="FunFam" id="3.30.70.2450:FF:000001">
    <property type="entry name" value="3-(3-hydroxy-phenyl)propionate/3-hydroxycinnamic acid hydroxylase"/>
    <property type="match status" value="1"/>
</dbReference>
<dbReference type="FunFam" id="3.50.50.60:FF:000126">
    <property type="entry name" value="3-(3-hydroxy-phenyl)propionate/3-hydroxycinnamic acid hydroxylase"/>
    <property type="match status" value="1"/>
</dbReference>
<dbReference type="Gene3D" id="3.30.70.2450">
    <property type="match status" value="1"/>
</dbReference>
<dbReference type="Gene3D" id="3.50.50.60">
    <property type="entry name" value="FAD/NAD(P)-binding domain"/>
    <property type="match status" value="1"/>
</dbReference>
<dbReference type="HAMAP" id="MF_01652">
    <property type="entry name" value="MhpA"/>
    <property type="match status" value="1"/>
</dbReference>
<dbReference type="InterPro" id="IPR023786">
    <property type="entry name" value="3-HPP/3HCI_hydroxylase"/>
</dbReference>
<dbReference type="InterPro" id="IPR002938">
    <property type="entry name" value="FAD-bd"/>
</dbReference>
<dbReference type="InterPro" id="IPR036188">
    <property type="entry name" value="FAD/NAD-bd_sf"/>
</dbReference>
<dbReference type="InterPro" id="IPR050631">
    <property type="entry name" value="PheA/TfdB_FAD_monoxygenase"/>
</dbReference>
<dbReference type="NCBIfam" id="NF004827">
    <property type="entry name" value="PRK06183.1-1"/>
    <property type="match status" value="1"/>
</dbReference>
<dbReference type="NCBIfam" id="NF004829">
    <property type="entry name" value="PRK06183.1-3"/>
    <property type="match status" value="1"/>
</dbReference>
<dbReference type="NCBIfam" id="NF004831">
    <property type="entry name" value="PRK06183.1-5"/>
    <property type="match status" value="1"/>
</dbReference>
<dbReference type="PANTHER" id="PTHR43476">
    <property type="entry name" value="3-(3-HYDROXY-PHENYL)PROPIONATE/3-HYDROXYCINNAMIC ACID HYDROXYLASE"/>
    <property type="match status" value="1"/>
</dbReference>
<dbReference type="PANTHER" id="PTHR43476:SF3">
    <property type="entry name" value="FAD-BINDING MONOOXYGENASE"/>
    <property type="match status" value="1"/>
</dbReference>
<dbReference type="Pfam" id="PF01494">
    <property type="entry name" value="FAD_binding_3"/>
    <property type="match status" value="1"/>
</dbReference>
<dbReference type="PRINTS" id="PR00420">
    <property type="entry name" value="RNGMNOXGNASE"/>
</dbReference>
<dbReference type="SUPFAM" id="SSF51905">
    <property type="entry name" value="FAD/NAD(P)-binding domain"/>
    <property type="match status" value="1"/>
</dbReference>
<evidence type="ECO:0000255" key="1">
    <source>
        <dbReference type="HAMAP-Rule" id="MF_01652"/>
    </source>
</evidence>
<comment type="function">
    <text evidence="1">Catalyzes the insertion of one atom of molecular oxygen into position 2 of the phenyl ring of 3-(3-hydroxyphenyl)propionate (3-HPP) and hydroxycinnamic acid (3HCI).</text>
</comment>
<comment type="catalytic activity">
    <reaction evidence="1">
        <text>3-(3-hydroxyphenyl)propanoate + NADH + O2 + H(+) = 3-(2,3-dihydroxyphenyl)propanoate + NAD(+) + H2O</text>
        <dbReference type="Rhea" id="RHEA:24785"/>
        <dbReference type="ChEBI" id="CHEBI:15377"/>
        <dbReference type="ChEBI" id="CHEBI:15378"/>
        <dbReference type="ChEBI" id="CHEBI:15379"/>
        <dbReference type="ChEBI" id="CHEBI:46951"/>
        <dbReference type="ChEBI" id="CHEBI:57277"/>
        <dbReference type="ChEBI" id="CHEBI:57540"/>
        <dbReference type="ChEBI" id="CHEBI:57945"/>
        <dbReference type="EC" id="1.14.13.127"/>
    </reaction>
</comment>
<comment type="catalytic activity">
    <reaction evidence="1">
        <text>(2E)-3-(3-hydroxyphenyl)prop-2-enoate + NADH + O2 + H(+) = (2E)-3-(2,3-dihydroxyphenyl)prop-2-enoate + NAD(+) + H2O</text>
        <dbReference type="Rhea" id="RHEA:27846"/>
        <dbReference type="ChEBI" id="CHEBI:15377"/>
        <dbReference type="ChEBI" id="CHEBI:15378"/>
        <dbReference type="ChEBI" id="CHEBI:15379"/>
        <dbReference type="ChEBI" id="CHEBI:47928"/>
        <dbReference type="ChEBI" id="CHEBI:57540"/>
        <dbReference type="ChEBI" id="CHEBI:57945"/>
        <dbReference type="ChEBI" id="CHEBI:58642"/>
        <dbReference type="EC" id="1.14.13.127"/>
    </reaction>
</comment>
<comment type="cofactor">
    <cofactor evidence="1">
        <name>FAD</name>
        <dbReference type="ChEBI" id="CHEBI:57692"/>
    </cofactor>
</comment>
<comment type="pathway">
    <text evidence="1">Aromatic compound metabolism; 3-phenylpropanoate degradation.</text>
</comment>
<comment type="similarity">
    <text evidence="1">Belongs to the PheA/TfdB FAD monooxygenase family.</text>
</comment>
<name>MHPA_ECOSM</name>
<sequence length="554" mass="62213">MAIQHPDIQPAVNHSVQVAIAGAGPVGLMMANYLGQMGIDVLVVEKLDKLIDYPRAIGIDDEALRTMQSVGLVDNVLPHTTPWHAMRFLTPKGRCFADIQPMTDEFGWPRRNAFIQPQVDAVMLEGLSRFPNVRCLFSRELEAFSQQDDEVTLHLKTEEGQRETVKAQWLVACDGGASFVRRTLNVPFEGKTAPNQWIVVDIANDPLSTPHIYLCCDPVRPYVSAALPHAVRRFEFMVMPGETEEQLREPQNMRKLLSKVLPNPDNVELIRQRVYTHNARLAQRFRIDRVLLAGDAAHIMPVWQGQGYNSGMRDAFNLAWKLALVIQGKARDALLDTYQQERRDHAKAMIDLSVTAGNVLAPPKRWQGTLRDGVSWLLNYLPPVKRYFLEMRFKPMPQYYGGALVREGEAKHSPVGKMFIQPKVTLENGDVTLLDNAIGANFAVIGWGCNPLWGMSDEQIQQWRALGTRFIQVVPEVQIHTAQDNHDGVLRVGDTQGRLRSWFAQHNASLVVMRPDRFVAATAIPQTLGKTLNKLASVMTLTRPDADVSVEKVA</sequence>
<organism>
    <name type="scientific">Escherichia coli (strain SMS-3-5 / SECEC)</name>
    <dbReference type="NCBI Taxonomy" id="439855"/>
    <lineage>
        <taxon>Bacteria</taxon>
        <taxon>Pseudomonadati</taxon>
        <taxon>Pseudomonadota</taxon>
        <taxon>Gammaproteobacteria</taxon>
        <taxon>Enterobacterales</taxon>
        <taxon>Enterobacteriaceae</taxon>
        <taxon>Escherichia</taxon>
    </lineage>
</organism>
<keyword id="KW-0058">Aromatic hydrocarbons catabolism</keyword>
<keyword id="KW-0274">FAD</keyword>
<keyword id="KW-0285">Flavoprotein</keyword>
<keyword id="KW-0520">NAD</keyword>
<keyword id="KW-0560">Oxidoreductase</keyword>